<comment type="function">
    <text evidence="2">ATPase that binds to both the 70S ribosome and the 50S ribosomal subunit in a nucleotide-independent manner.</text>
</comment>
<comment type="cofactor">
    <cofactor evidence="1">
        <name>Mg(2+)</name>
        <dbReference type="ChEBI" id="CHEBI:18420"/>
    </cofactor>
</comment>
<comment type="similarity">
    <text evidence="2">Belongs to the TRAFAC class OBG-HflX-like GTPase superfamily. OBG GTPase family. YchF/OLA1 subfamily.</text>
</comment>
<keyword id="KW-0067">ATP-binding</keyword>
<keyword id="KW-0460">Magnesium</keyword>
<keyword id="KW-0479">Metal-binding</keyword>
<keyword id="KW-0547">Nucleotide-binding</keyword>
<evidence type="ECO:0000250" key="1"/>
<evidence type="ECO:0000255" key="2">
    <source>
        <dbReference type="HAMAP-Rule" id="MF_00944"/>
    </source>
</evidence>
<evidence type="ECO:0000255" key="3">
    <source>
        <dbReference type="PROSITE-ProRule" id="PRU01228"/>
    </source>
</evidence>
<sequence length="362" mass="41124">MGFKCGIIGLPNVGKSTLFNVLTKGNSAVANFPFCTIKPNIGIVSVPDNRINNLSKIILPKKITNAFIEFVDIAGLVKGASKGEGLGNQFLSNIRDTHAIAHVVRCFKDDNVSHIYNQLQPKIDVDIINSELILADFETCEKSILKLQKKLNFNKKEIEEKLVVLSKCLDHLKKFLMLKTLELDENEKKIISYLRFLTLKPTMYIANINEQKESCFFLNELEKMAKKEGSSVIPINSNLELDLIKMNEDEQKYFMKSFNITNLGLNNIIKSGYKILNLITFFTAGIKEVRAWAIPNGSTSLQAADKIHSDFRRGFIRAQIINYLDFIKYKSETKVKEAGKYRSEGKFYQIQDGDIINFLFNV</sequence>
<organism>
    <name type="scientific">Buchnera aphidicola subsp. Schizaphis graminum (strain Sg)</name>
    <dbReference type="NCBI Taxonomy" id="198804"/>
    <lineage>
        <taxon>Bacteria</taxon>
        <taxon>Pseudomonadati</taxon>
        <taxon>Pseudomonadota</taxon>
        <taxon>Gammaproteobacteria</taxon>
        <taxon>Enterobacterales</taxon>
        <taxon>Erwiniaceae</taxon>
        <taxon>Buchnera</taxon>
    </lineage>
</organism>
<protein>
    <recommendedName>
        <fullName evidence="2">Ribosome-binding ATPase YchF</fullName>
    </recommendedName>
</protein>
<dbReference type="EMBL" id="AE013218">
    <property type="protein sequence ID" value="AAM67750.1"/>
    <property type="molecule type" value="Genomic_DNA"/>
</dbReference>
<dbReference type="RefSeq" id="WP_011053717.1">
    <property type="nucleotide sequence ID" value="NC_004061.1"/>
</dbReference>
<dbReference type="SMR" id="Q8K9V2"/>
<dbReference type="STRING" id="198804.BUsg_185"/>
<dbReference type="GeneID" id="93003653"/>
<dbReference type="KEGG" id="bas:BUsg_185"/>
<dbReference type="eggNOG" id="COG0012">
    <property type="taxonomic scope" value="Bacteria"/>
</dbReference>
<dbReference type="HOGENOM" id="CLU_018395_0_1_6"/>
<dbReference type="Proteomes" id="UP000000416">
    <property type="component" value="Chromosome"/>
</dbReference>
<dbReference type="GO" id="GO:0005737">
    <property type="term" value="C:cytoplasm"/>
    <property type="evidence" value="ECO:0007669"/>
    <property type="project" value="TreeGrafter"/>
</dbReference>
<dbReference type="GO" id="GO:0005524">
    <property type="term" value="F:ATP binding"/>
    <property type="evidence" value="ECO:0007669"/>
    <property type="project" value="UniProtKB-UniRule"/>
</dbReference>
<dbReference type="GO" id="GO:0016887">
    <property type="term" value="F:ATP hydrolysis activity"/>
    <property type="evidence" value="ECO:0007669"/>
    <property type="project" value="UniProtKB-UniRule"/>
</dbReference>
<dbReference type="GO" id="GO:0005525">
    <property type="term" value="F:GTP binding"/>
    <property type="evidence" value="ECO:0007669"/>
    <property type="project" value="InterPro"/>
</dbReference>
<dbReference type="GO" id="GO:0046872">
    <property type="term" value="F:metal ion binding"/>
    <property type="evidence" value="ECO:0007669"/>
    <property type="project" value="UniProtKB-KW"/>
</dbReference>
<dbReference type="GO" id="GO:0043023">
    <property type="term" value="F:ribosomal large subunit binding"/>
    <property type="evidence" value="ECO:0007669"/>
    <property type="project" value="UniProtKB-UniRule"/>
</dbReference>
<dbReference type="CDD" id="cd04867">
    <property type="entry name" value="TGS_YchF_OLA1"/>
    <property type="match status" value="1"/>
</dbReference>
<dbReference type="CDD" id="cd01900">
    <property type="entry name" value="YchF"/>
    <property type="match status" value="1"/>
</dbReference>
<dbReference type="FunFam" id="3.10.20.30:FF:000001">
    <property type="entry name" value="Ribosome-binding ATPase YchF"/>
    <property type="match status" value="1"/>
</dbReference>
<dbReference type="Gene3D" id="3.10.20.30">
    <property type="match status" value="1"/>
</dbReference>
<dbReference type="Gene3D" id="3.40.50.300">
    <property type="entry name" value="P-loop containing nucleotide triphosphate hydrolases"/>
    <property type="match status" value="1"/>
</dbReference>
<dbReference type="Gene3D" id="1.10.150.300">
    <property type="entry name" value="TGS-like domain"/>
    <property type="match status" value="1"/>
</dbReference>
<dbReference type="HAMAP" id="MF_00944">
    <property type="entry name" value="YchF_OLA1_ATPase"/>
    <property type="match status" value="1"/>
</dbReference>
<dbReference type="InterPro" id="IPR004396">
    <property type="entry name" value="ATPase_YchF/OLA1"/>
</dbReference>
<dbReference type="InterPro" id="IPR012675">
    <property type="entry name" value="Beta-grasp_dom_sf"/>
</dbReference>
<dbReference type="InterPro" id="IPR031167">
    <property type="entry name" value="G_OBG"/>
</dbReference>
<dbReference type="InterPro" id="IPR006073">
    <property type="entry name" value="GTP-bd"/>
</dbReference>
<dbReference type="InterPro" id="IPR027417">
    <property type="entry name" value="P-loop_NTPase"/>
</dbReference>
<dbReference type="InterPro" id="IPR004095">
    <property type="entry name" value="TGS"/>
</dbReference>
<dbReference type="InterPro" id="IPR012676">
    <property type="entry name" value="TGS-like"/>
</dbReference>
<dbReference type="InterPro" id="IPR023192">
    <property type="entry name" value="TGS-like_dom_sf"/>
</dbReference>
<dbReference type="InterPro" id="IPR013029">
    <property type="entry name" value="YchF_C"/>
</dbReference>
<dbReference type="InterPro" id="IPR041706">
    <property type="entry name" value="YchF_N"/>
</dbReference>
<dbReference type="NCBIfam" id="TIGR00092">
    <property type="entry name" value="redox-regulated ATPase YchF"/>
    <property type="match status" value="1"/>
</dbReference>
<dbReference type="PANTHER" id="PTHR23305">
    <property type="entry name" value="OBG GTPASE FAMILY"/>
    <property type="match status" value="1"/>
</dbReference>
<dbReference type="PANTHER" id="PTHR23305:SF18">
    <property type="entry name" value="OBG-TYPE G DOMAIN-CONTAINING PROTEIN"/>
    <property type="match status" value="1"/>
</dbReference>
<dbReference type="Pfam" id="PF01926">
    <property type="entry name" value="MMR_HSR1"/>
    <property type="match status" value="1"/>
</dbReference>
<dbReference type="Pfam" id="PF06071">
    <property type="entry name" value="YchF-GTPase_C"/>
    <property type="match status" value="1"/>
</dbReference>
<dbReference type="PIRSF" id="PIRSF006641">
    <property type="entry name" value="CHP00092"/>
    <property type="match status" value="1"/>
</dbReference>
<dbReference type="PRINTS" id="PR00326">
    <property type="entry name" value="GTP1OBG"/>
</dbReference>
<dbReference type="SUPFAM" id="SSF52540">
    <property type="entry name" value="P-loop containing nucleoside triphosphate hydrolases"/>
    <property type="match status" value="1"/>
</dbReference>
<dbReference type="SUPFAM" id="SSF81271">
    <property type="entry name" value="TGS-like"/>
    <property type="match status" value="1"/>
</dbReference>
<dbReference type="PROSITE" id="PS51710">
    <property type="entry name" value="G_OBG"/>
    <property type="match status" value="1"/>
</dbReference>
<dbReference type="PROSITE" id="PS51880">
    <property type="entry name" value="TGS"/>
    <property type="match status" value="1"/>
</dbReference>
<accession>Q8K9V2</accession>
<reference key="1">
    <citation type="journal article" date="2002" name="Science">
        <title>50 million years of genomic stasis in endosymbiotic bacteria.</title>
        <authorList>
            <person name="Tamas I."/>
            <person name="Klasson L."/>
            <person name="Canbaeck B."/>
            <person name="Naeslund A.K."/>
            <person name="Eriksson A.-S."/>
            <person name="Wernegreen J.J."/>
            <person name="Sandstroem J.P."/>
            <person name="Moran N.A."/>
            <person name="Andersson S.G.E."/>
        </authorList>
    </citation>
    <scope>NUCLEOTIDE SEQUENCE [LARGE SCALE GENOMIC DNA]</scope>
    <source>
        <strain>Sg</strain>
    </source>
</reference>
<proteinExistence type="inferred from homology"/>
<gene>
    <name evidence="2" type="primary">ychF</name>
    <name type="synonym">engD</name>
    <name type="ordered locus">BUsg_185</name>
</gene>
<name>YCHF_BUCAP</name>
<feature type="initiator methionine" description="Removed" evidence="1">
    <location>
        <position position="1"/>
    </location>
</feature>
<feature type="chain" id="PRO_0000201673" description="Ribosome-binding ATPase YchF">
    <location>
        <begin position="2"/>
        <end position="362"/>
    </location>
</feature>
<feature type="domain" description="OBG-type G">
    <location>
        <begin position="3"/>
        <end position="255"/>
    </location>
</feature>
<feature type="domain" description="TGS" evidence="3">
    <location>
        <begin position="277"/>
        <end position="360"/>
    </location>
</feature>
<feature type="binding site" evidence="2">
    <location>
        <begin position="12"/>
        <end position="17"/>
    </location>
    <ligand>
        <name>ATP</name>
        <dbReference type="ChEBI" id="CHEBI:30616"/>
    </ligand>
</feature>
<feature type="binding site" evidence="1">
    <location>
        <position position="16"/>
    </location>
    <ligand>
        <name>Mg(2+)</name>
        <dbReference type="ChEBI" id="CHEBI:18420"/>
    </ligand>
</feature>
<feature type="binding site" evidence="1">
    <location>
        <position position="36"/>
    </location>
    <ligand>
        <name>Mg(2+)</name>
        <dbReference type="ChEBI" id="CHEBI:18420"/>
    </ligand>
</feature>